<feature type="chain" id="PRO_0000079887" description="2,3-dihydroxybenzoate decarboxylase">
    <location>
        <begin position="1"/>
        <end position="338"/>
    </location>
</feature>
<feature type="active site">
    <location>
        <position position="251"/>
    </location>
</feature>
<feature type="strand" evidence="2">
    <location>
        <begin position="3"/>
        <end position="11"/>
    </location>
</feature>
<feature type="helix" evidence="2">
    <location>
        <begin position="14"/>
        <end position="16"/>
    </location>
</feature>
<feature type="helix" evidence="2">
    <location>
        <begin position="17"/>
        <end position="27"/>
    </location>
</feature>
<feature type="helix" evidence="2">
    <location>
        <begin position="31"/>
        <end position="39"/>
    </location>
</feature>
<feature type="helix" evidence="2">
    <location>
        <begin position="44"/>
        <end position="52"/>
    </location>
</feature>
<feature type="strand" evidence="2">
    <location>
        <begin position="54"/>
        <end position="61"/>
    </location>
</feature>
<feature type="helix" evidence="2">
    <location>
        <begin position="65"/>
        <end position="68"/>
    </location>
</feature>
<feature type="helix" evidence="2">
    <location>
        <begin position="72"/>
        <end position="90"/>
    </location>
</feature>
<feature type="turn" evidence="2">
    <location>
        <begin position="94"/>
        <end position="96"/>
    </location>
</feature>
<feature type="strand" evidence="2">
    <location>
        <begin position="97"/>
        <end position="99"/>
    </location>
</feature>
<feature type="helix" evidence="2">
    <location>
        <begin position="108"/>
        <end position="122"/>
    </location>
</feature>
<feature type="strand" evidence="2">
    <location>
        <begin position="127"/>
        <end position="136"/>
    </location>
</feature>
<feature type="strand" evidence="2">
    <location>
        <begin position="141"/>
        <end position="143"/>
    </location>
</feature>
<feature type="helix" evidence="2">
    <location>
        <begin position="148"/>
        <end position="150"/>
    </location>
</feature>
<feature type="helix" evidence="2">
    <location>
        <begin position="151"/>
        <end position="160"/>
    </location>
</feature>
<feature type="strand" evidence="2">
    <location>
        <begin position="164"/>
        <end position="167"/>
    </location>
</feature>
<feature type="helix" evidence="2">
    <location>
        <begin position="173"/>
        <end position="179"/>
    </location>
</feature>
<feature type="helix" evidence="2">
    <location>
        <begin position="181"/>
        <end position="186"/>
    </location>
</feature>
<feature type="turn" evidence="2">
    <location>
        <begin position="187"/>
        <end position="191"/>
    </location>
</feature>
<feature type="helix" evidence="2">
    <location>
        <begin position="192"/>
        <end position="206"/>
    </location>
</feature>
<feature type="helix" evidence="2">
    <location>
        <begin position="209"/>
        <end position="212"/>
    </location>
</feature>
<feature type="strand" evidence="2">
    <location>
        <begin position="218"/>
        <end position="221"/>
    </location>
</feature>
<feature type="helix" evidence="2">
    <location>
        <begin position="222"/>
        <end position="224"/>
    </location>
</feature>
<feature type="helix" evidence="2">
    <location>
        <begin position="227"/>
        <end position="230"/>
    </location>
</feature>
<feature type="helix" evidence="2">
    <location>
        <begin position="231"/>
        <end position="239"/>
    </location>
</feature>
<feature type="helix" evidence="2">
    <location>
        <begin position="242"/>
        <end position="244"/>
    </location>
</feature>
<feature type="helix" evidence="2">
    <location>
        <begin position="247"/>
        <end position="250"/>
    </location>
</feature>
<feature type="helix" evidence="2">
    <location>
        <begin position="255"/>
        <end position="261"/>
    </location>
</feature>
<feature type="strand" evidence="2">
    <location>
        <begin position="263"/>
        <end position="266"/>
    </location>
</feature>
<feature type="helix" evidence="2">
    <location>
        <begin position="273"/>
        <end position="283"/>
    </location>
</feature>
<feature type="helix" evidence="2">
    <location>
        <begin position="285"/>
        <end position="287"/>
    </location>
</feature>
<feature type="turn" evidence="2">
    <location>
        <begin position="294"/>
        <end position="296"/>
    </location>
</feature>
<feature type="helix" evidence="2">
    <location>
        <begin position="299"/>
        <end position="308"/>
    </location>
</feature>
<feature type="helix" evidence="2">
    <location>
        <begin position="313"/>
        <end position="320"/>
    </location>
</feature>
<feature type="helix" evidence="2">
    <location>
        <begin position="322"/>
        <end position="327"/>
    </location>
</feature>
<feature type="turn" evidence="2">
    <location>
        <begin position="334"/>
        <end position="337"/>
    </location>
</feature>
<dbReference type="EC" id="4.1.1.46"/>
<dbReference type="EMBL" id="BA000049">
    <property type="protein sequence ID" value="BAE55511.1"/>
    <property type="molecule type" value="Genomic_DNA"/>
</dbReference>
<dbReference type="RefSeq" id="XP_001817513.1">
    <property type="nucleotide sequence ID" value="XM_001817461.3"/>
</dbReference>
<dbReference type="PDB" id="7A19">
    <property type="method" value="X-ray"/>
    <property type="resolution" value="1.21 A"/>
    <property type="chains" value="A/B=1-338"/>
</dbReference>
<dbReference type="PDB" id="7A1A">
    <property type="method" value="X-ray"/>
    <property type="resolution" value="1.53 A"/>
    <property type="chains" value="A/B=1-338"/>
</dbReference>
<dbReference type="PDB" id="7WJR">
    <property type="method" value="X-ray"/>
    <property type="resolution" value="2.00 A"/>
    <property type="chains" value="A/B/C/D=1-338"/>
</dbReference>
<dbReference type="PDB" id="7WKL">
    <property type="method" value="X-ray"/>
    <property type="resolution" value="1.88 A"/>
    <property type="chains" value="A/B/C/D=1-338"/>
</dbReference>
<dbReference type="PDB" id="7WKM">
    <property type="method" value="X-ray"/>
    <property type="resolution" value="1.80 A"/>
    <property type="chains" value="A/B=1-338"/>
</dbReference>
<dbReference type="PDB" id="7WMB">
    <property type="method" value="X-ray"/>
    <property type="resolution" value="2.20 A"/>
    <property type="chains" value="A/B=1-338"/>
</dbReference>
<dbReference type="PDBsum" id="7A19"/>
<dbReference type="PDBsum" id="7A1A"/>
<dbReference type="PDBsum" id="7WJR"/>
<dbReference type="PDBsum" id="7WKL"/>
<dbReference type="PDBsum" id="7WKM"/>
<dbReference type="PDBsum" id="7WMB"/>
<dbReference type="SMR" id="P80402"/>
<dbReference type="STRING" id="510516.P80402"/>
<dbReference type="EnsemblFungi" id="BAE55511">
    <property type="protein sequence ID" value="BAE55511"/>
    <property type="gene ID" value="AO090005000447"/>
</dbReference>
<dbReference type="GeneID" id="5989458"/>
<dbReference type="KEGG" id="aor:AO090005000447"/>
<dbReference type="VEuPathDB" id="FungiDB:AO090005000447"/>
<dbReference type="HOGENOM" id="CLU_039329_5_2_1"/>
<dbReference type="OMA" id="QDIWDAK"/>
<dbReference type="OrthoDB" id="20852at5052"/>
<dbReference type="UniPathway" id="UPA00156"/>
<dbReference type="Proteomes" id="UP000006564">
    <property type="component" value="Chromosome 1"/>
</dbReference>
<dbReference type="GO" id="GO:0005829">
    <property type="term" value="C:cytosol"/>
    <property type="evidence" value="ECO:0007669"/>
    <property type="project" value="TreeGrafter"/>
</dbReference>
<dbReference type="GO" id="GO:0016787">
    <property type="term" value="F:hydrolase activity"/>
    <property type="evidence" value="ECO:0007669"/>
    <property type="project" value="InterPro"/>
</dbReference>
<dbReference type="GO" id="GO:0050150">
    <property type="term" value="F:o-pyrocatechuate decarboxylase activity"/>
    <property type="evidence" value="ECO:0007669"/>
    <property type="project" value="UniProtKB-EC"/>
</dbReference>
<dbReference type="GO" id="GO:0043640">
    <property type="term" value="P:benzoate catabolic process via hydroxylation"/>
    <property type="evidence" value="ECO:0007669"/>
    <property type="project" value="UniProtKB-UniPathway"/>
</dbReference>
<dbReference type="GO" id="GO:0019748">
    <property type="term" value="P:secondary metabolic process"/>
    <property type="evidence" value="ECO:0007669"/>
    <property type="project" value="TreeGrafter"/>
</dbReference>
<dbReference type="FunFam" id="3.20.20.140:FF:000043">
    <property type="entry name" value="Amidohydrolase family protein"/>
    <property type="match status" value="1"/>
</dbReference>
<dbReference type="Gene3D" id="3.20.20.140">
    <property type="entry name" value="Metal-dependent hydrolases"/>
    <property type="match status" value="1"/>
</dbReference>
<dbReference type="InterPro" id="IPR032465">
    <property type="entry name" value="ACMSD"/>
</dbReference>
<dbReference type="InterPro" id="IPR006680">
    <property type="entry name" value="Amidohydro-rel"/>
</dbReference>
<dbReference type="InterPro" id="IPR032466">
    <property type="entry name" value="Metal_Hydrolase"/>
</dbReference>
<dbReference type="PANTHER" id="PTHR21240">
    <property type="entry name" value="2-AMINO-3-CARBOXYLMUCONATE-6-SEMIALDEHYDE DECARBOXYLASE"/>
    <property type="match status" value="1"/>
</dbReference>
<dbReference type="PANTHER" id="PTHR21240:SF31">
    <property type="entry name" value="AMIDOHYDROLASE FAMILY PROTEIN (AFU_ORTHOLOGUE AFUA_7G05840)"/>
    <property type="match status" value="1"/>
</dbReference>
<dbReference type="Pfam" id="PF04909">
    <property type="entry name" value="Amidohydro_2"/>
    <property type="match status" value="1"/>
</dbReference>
<dbReference type="SUPFAM" id="SSF51556">
    <property type="entry name" value="Metallo-dependent hydrolases"/>
    <property type="match status" value="1"/>
</dbReference>
<reference key="1">
    <citation type="journal article" date="2005" name="Nature">
        <title>Genome sequencing and analysis of Aspergillus oryzae.</title>
        <authorList>
            <person name="Machida M."/>
            <person name="Asai K."/>
            <person name="Sano M."/>
            <person name="Tanaka T."/>
            <person name="Kumagai T."/>
            <person name="Terai G."/>
            <person name="Kusumoto K."/>
            <person name="Arima T."/>
            <person name="Akita O."/>
            <person name="Kashiwagi Y."/>
            <person name="Abe K."/>
            <person name="Gomi K."/>
            <person name="Horiuchi H."/>
            <person name="Kitamoto K."/>
            <person name="Kobayashi T."/>
            <person name="Takeuchi M."/>
            <person name="Denning D.W."/>
            <person name="Galagan J.E."/>
            <person name="Nierman W.C."/>
            <person name="Yu J."/>
            <person name="Archer D.B."/>
            <person name="Bennett J.W."/>
            <person name="Bhatnagar D."/>
            <person name="Cleveland T.E."/>
            <person name="Fedorova N.D."/>
            <person name="Gotoh O."/>
            <person name="Horikawa H."/>
            <person name="Hosoyama A."/>
            <person name="Ichinomiya M."/>
            <person name="Igarashi R."/>
            <person name="Iwashita K."/>
            <person name="Juvvadi P.R."/>
            <person name="Kato M."/>
            <person name="Kato Y."/>
            <person name="Kin T."/>
            <person name="Kokubun A."/>
            <person name="Maeda H."/>
            <person name="Maeyama N."/>
            <person name="Maruyama J."/>
            <person name="Nagasaki H."/>
            <person name="Nakajima T."/>
            <person name="Oda K."/>
            <person name="Okada K."/>
            <person name="Paulsen I."/>
            <person name="Sakamoto K."/>
            <person name="Sawano T."/>
            <person name="Takahashi M."/>
            <person name="Takase K."/>
            <person name="Terabayashi Y."/>
            <person name="Wortman J.R."/>
            <person name="Yamada O."/>
            <person name="Yamagata Y."/>
            <person name="Anazawa H."/>
            <person name="Hata Y."/>
            <person name="Koide Y."/>
            <person name="Komori T."/>
            <person name="Koyama Y."/>
            <person name="Minetoki T."/>
            <person name="Suharnan S."/>
            <person name="Tanaka A."/>
            <person name="Isono K."/>
            <person name="Kuhara S."/>
            <person name="Ogasawara N."/>
            <person name="Kikuchi H."/>
        </authorList>
    </citation>
    <scope>NUCLEOTIDE SEQUENCE [LARGE SCALE GENOMIC DNA]</scope>
    <source>
        <strain>ATCC 42149 / RIB 40</strain>
    </source>
</reference>
<reference key="2">
    <citation type="journal article" date="1996" name="Biochim. Biophys. Acta">
        <title>Identification of the active-site peptide of 2,3-dihydroxybenzoic acid decarboxylase from Aspergillus oryzae.</title>
        <authorList>
            <person name="Santha R."/>
            <person name="Rao N.A."/>
            <person name="Vaidyanathan C.S."/>
        </authorList>
    </citation>
    <scope>PROTEIN SEQUENCE OF 1-20; 52-65 AND 244-252</scope>
</reference>
<sequence length="338" mass="38857">MLGKIALEEAFALPRFEEKTRWWASLFSTDAETHVKEITDINKIRIEHADKHGVGYQILSYTAPGVQDIWDPVEAQALAVEINDYIAEQVRVNPDRFGAFATLSMHNPKEAADELRRCVEKYGFKGALVNDTQRAGPDGDDMIFYDNADWDIFWQTCTELDVPFYMHPRNPTGTIYEKLWADRKWLVGPPLSFAHGVSLHVLGMVTNGVFDRHPKLQIIMGHLGEHVPFDMWRINHWFEDRKKLLGLAETCKKTIRDYFAENIWITTSGHFSTTTLNFCMAEVGSDRILFSIDYPFETFSDACEWFDNAELNGTDRLKIGRENAKKLFKLDSYKDSSA</sequence>
<organism>
    <name type="scientific">Aspergillus oryzae (strain ATCC 42149 / RIB 40)</name>
    <name type="common">Yellow koji mold</name>
    <dbReference type="NCBI Taxonomy" id="510516"/>
    <lineage>
        <taxon>Eukaryota</taxon>
        <taxon>Fungi</taxon>
        <taxon>Dikarya</taxon>
        <taxon>Ascomycota</taxon>
        <taxon>Pezizomycotina</taxon>
        <taxon>Eurotiomycetes</taxon>
        <taxon>Eurotiomycetidae</taxon>
        <taxon>Eurotiales</taxon>
        <taxon>Aspergillaceae</taxon>
        <taxon>Aspergillus</taxon>
        <taxon>Aspergillus subgen. Circumdati</taxon>
    </lineage>
</organism>
<accession>P80402</accession>
<accession>Q2USF4</accession>
<gene>
    <name type="ORF">AO090005000447</name>
</gene>
<proteinExistence type="evidence at protein level"/>
<keyword id="KW-0002">3D-structure</keyword>
<keyword id="KW-0210">Decarboxylase</keyword>
<keyword id="KW-0903">Direct protein sequencing</keyword>
<keyword id="KW-0456">Lyase</keyword>
<keyword id="KW-1185">Reference proteome</keyword>
<protein>
    <recommendedName>
        <fullName>2,3-dihydroxybenzoate decarboxylase</fullName>
        <shortName>2,3-DHBA decarboxylase</shortName>
        <shortName>DHBD</shortName>
        <ecNumber>4.1.1.46</ecNumber>
    </recommendedName>
    <alternativeName>
        <fullName>o-pyrocatechuate decarboxylase</fullName>
    </alternativeName>
</protein>
<evidence type="ECO:0000305" key="1"/>
<evidence type="ECO:0007829" key="2">
    <source>
        <dbReference type="PDB" id="7A19"/>
    </source>
</evidence>
<comment type="function">
    <text>Has an absolute substrate specificity for 2,3-DHBA.</text>
</comment>
<comment type="catalytic activity">
    <reaction>
        <text>2,3-dihydroxybenzoate + H(+) = catechol + CO2</text>
        <dbReference type="Rhea" id="RHEA:21492"/>
        <dbReference type="ChEBI" id="CHEBI:15378"/>
        <dbReference type="ChEBI" id="CHEBI:16526"/>
        <dbReference type="ChEBI" id="CHEBI:18135"/>
        <dbReference type="ChEBI" id="CHEBI:36654"/>
        <dbReference type="EC" id="4.1.1.46"/>
    </reaction>
</comment>
<comment type="pathway">
    <text>Aromatic compound metabolism; benzoate degradation via hydroxylation.</text>
</comment>
<comment type="subunit">
    <text>Homotetramer.</text>
</comment>
<comment type="similarity">
    <text evidence="1">Belongs to the metallo-dependent hydrolases superfamily.</text>
</comment>
<name>DBD23_ASPOR</name>